<keyword id="KW-0066">ATP synthesis</keyword>
<keyword id="KW-0067">ATP-binding</keyword>
<keyword id="KW-0997">Cell inner membrane</keyword>
<keyword id="KW-1003">Cell membrane</keyword>
<keyword id="KW-0139">CF(1)</keyword>
<keyword id="KW-0375">Hydrogen ion transport</keyword>
<keyword id="KW-0406">Ion transport</keyword>
<keyword id="KW-0472">Membrane</keyword>
<keyword id="KW-0547">Nucleotide-binding</keyword>
<keyword id="KW-1278">Translocase</keyword>
<keyword id="KW-0813">Transport</keyword>
<proteinExistence type="inferred from homology"/>
<name>ATPA_HELPJ</name>
<feature type="chain" id="PRO_0000144331" description="ATP synthase subunit alpha">
    <location>
        <begin position="1"/>
        <end position="503"/>
    </location>
</feature>
<feature type="binding site" evidence="1">
    <location>
        <begin position="170"/>
        <end position="177"/>
    </location>
    <ligand>
        <name>ATP</name>
        <dbReference type="ChEBI" id="CHEBI:30616"/>
    </ligand>
</feature>
<feature type="site" description="Required for activity" evidence="1">
    <location>
        <position position="363"/>
    </location>
</feature>
<accession>Q9ZK79</accession>
<reference key="1">
    <citation type="journal article" date="1999" name="Nature">
        <title>Genomic sequence comparison of two unrelated isolates of the human gastric pathogen Helicobacter pylori.</title>
        <authorList>
            <person name="Alm R.A."/>
            <person name="Ling L.-S.L."/>
            <person name="Moir D.T."/>
            <person name="King B.L."/>
            <person name="Brown E.D."/>
            <person name="Doig P.C."/>
            <person name="Smith D.R."/>
            <person name="Noonan B."/>
            <person name="Guild B.C."/>
            <person name="deJonge B.L."/>
            <person name="Carmel G."/>
            <person name="Tummino P.J."/>
            <person name="Caruso A."/>
            <person name="Uria-Nickelsen M."/>
            <person name="Mills D.M."/>
            <person name="Ives C."/>
            <person name="Gibson R."/>
            <person name="Merberg D."/>
            <person name="Mills S.D."/>
            <person name="Jiang Q."/>
            <person name="Taylor D.E."/>
            <person name="Vovis G.F."/>
            <person name="Trust T.J."/>
        </authorList>
    </citation>
    <scope>NUCLEOTIDE SEQUENCE [LARGE SCALE GENOMIC DNA]</scope>
    <source>
        <strain>J99 / ATCC 700824</strain>
    </source>
</reference>
<gene>
    <name evidence="1" type="primary">atpA</name>
    <name type="ordered locus">jhp_1062</name>
</gene>
<comment type="function">
    <text evidence="1">Produces ATP from ADP in the presence of a proton gradient across the membrane. The alpha chain is a regulatory subunit.</text>
</comment>
<comment type="catalytic activity">
    <reaction evidence="1">
        <text>ATP + H2O + 4 H(+)(in) = ADP + phosphate + 5 H(+)(out)</text>
        <dbReference type="Rhea" id="RHEA:57720"/>
        <dbReference type="ChEBI" id="CHEBI:15377"/>
        <dbReference type="ChEBI" id="CHEBI:15378"/>
        <dbReference type="ChEBI" id="CHEBI:30616"/>
        <dbReference type="ChEBI" id="CHEBI:43474"/>
        <dbReference type="ChEBI" id="CHEBI:456216"/>
        <dbReference type="EC" id="7.1.2.2"/>
    </reaction>
</comment>
<comment type="subunit">
    <text evidence="1">F-type ATPases have 2 components, CF(1) - the catalytic core - and CF(0) - the membrane proton channel. CF(1) has five subunits: alpha(3), beta(3), gamma(1), delta(1), epsilon(1). CF(0) has three main subunits: a(1), b(2) and c(9-12). The alpha and beta chains form an alternating ring which encloses part of the gamma chain. CF(1) is attached to CF(0) by a central stalk formed by the gamma and epsilon chains, while a peripheral stalk is formed by the delta and b chains.</text>
</comment>
<comment type="subcellular location">
    <subcellularLocation>
        <location evidence="1">Cell inner membrane</location>
        <topology evidence="1">Peripheral membrane protein</topology>
    </subcellularLocation>
</comment>
<comment type="similarity">
    <text evidence="1">Belongs to the ATPase alpha/beta chains family.</text>
</comment>
<dbReference type="EC" id="7.1.2.2" evidence="1"/>
<dbReference type="EMBL" id="AE001439">
    <property type="protein sequence ID" value="AAD06627.1"/>
    <property type="molecule type" value="Genomic_DNA"/>
</dbReference>
<dbReference type="PIR" id="F71855">
    <property type="entry name" value="F71855"/>
</dbReference>
<dbReference type="RefSeq" id="WP_000080471.1">
    <property type="nucleotide sequence ID" value="NC_000921.1"/>
</dbReference>
<dbReference type="SMR" id="Q9ZK79"/>
<dbReference type="KEGG" id="hpj:jhp_1062"/>
<dbReference type="eggNOG" id="COG0056">
    <property type="taxonomic scope" value="Bacteria"/>
</dbReference>
<dbReference type="Proteomes" id="UP000000804">
    <property type="component" value="Chromosome"/>
</dbReference>
<dbReference type="GO" id="GO:0005886">
    <property type="term" value="C:plasma membrane"/>
    <property type="evidence" value="ECO:0007669"/>
    <property type="project" value="UniProtKB-SubCell"/>
</dbReference>
<dbReference type="GO" id="GO:0045259">
    <property type="term" value="C:proton-transporting ATP synthase complex"/>
    <property type="evidence" value="ECO:0007669"/>
    <property type="project" value="UniProtKB-KW"/>
</dbReference>
<dbReference type="GO" id="GO:0043531">
    <property type="term" value="F:ADP binding"/>
    <property type="evidence" value="ECO:0007669"/>
    <property type="project" value="TreeGrafter"/>
</dbReference>
<dbReference type="GO" id="GO:0005524">
    <property type="term" value="F:ATP binding"/>
    <property type="evidence" value="ECO:0007669"/>
    <property type="project" value="UniProtKB-UniRule"/>
</dbReference>
<dbReference type="GO" id="GO:0046933">
    <property type="term" value="F:proton-transporting ATP synthase activity, rotational mechanism"/>
    <property type="evidence" value="ECO:0007669"/>
    <property type="project" value="UniProtKB-UniRule"/>
</dbReference>
<dbReference type="CDD" id="cd18113">
    <property type="entry name" value="ATP-synt_F1_alpha_C"/>
    <property type="match status" value="1"/>
</dbReference>
<dbReference type="CDD" id="cd18116">
    <property type="entry name" value="ATP-synt_F1_alpha_N"/>
    <property type="match status" value="1"/>
</dbReference>
<dbReference type="CDD" id="cd01132">
    <property type="entry name" value="F1-ATPase_alpha_CD"/>
    <property type="match status" value="1"/>
</dbReference>
<dbReference type="FunFam" id="1.20.150.20:FF:000001">
    <property type="entry name" value="ATP synthase subunit alpha"/>
    <property type="match status" value="1"/>
</dbReference>
<dbReference type="FunFam" id="3.40.50.300:FF:000002">
    <property type="entry name" value="ATP synthase subunit alpha"/>
    <property type="match status" value="1"/>
</dbReference>
<dbReference type="Gene3D" id="2.40.30.20">
    <property type="match status" value="1"/>
</dbReference>
<dbReference type="Gene3D" id="1.20.150.20">
    <property type="entry name" value="ATP synthase alpha/beta chain, C-terminal domain"/>
    <property type="match status" value="1"/>
</dbReference>
<dbReference type="Gene3D" id="3.40.50.300">
    <property type="entry name" value="P-loop containing nucleotide triphosphate hydrolases"/>
    <property type="match status" value="1"/>
</dbReference>
<dbReference type="HAMAP" id="MF_01346">
    <property type="entry name" value="ATP_synth_alpha_bact"/>
    <property type="match status" value="1"/>
</dbReference>
<dbReference type="InterPro" id="IPR023366">
    <property type="entry name" value="ATP_synth_asu-like_sf"/>
</dbReference>
<dbReference type="InterPro" id="IPR000793">
    <property type="entry name" value="ATP_synth_asu_C"/>
</dbReference>
<dbReference type="InterPro" id="IPR038376">
    <property type="entry name" value="ATP_synth_asu_C_sf"/>
</dbReference>
<dbReference type="InterPro" id="IPR033732">
    <property type="entry name" value="ATP_synth_F1_a_nt-bd_dom"/>
</dbReference>
<dbReference type="InterPro" id="IPR005294">
    <property type="entry name" value="ATP_synth_F1_asu"/>
</dbReference>
<dbReference type="InterPro" id="IPR020003">
    <property type="entry name" value="ATPase_a/bsu_AS"/>
</dbReference>
<dbReference type="InterPro" id="IPR004100">
    <property type="entry name" value="ATPase_F1/V1/A1_a/bsu_N"/>
</dbReference>
<dbReference type="InterPro" id="IPR036121">
    <property type="entry name" value="ATPase_F1/V1/A1_a/bsu_N_sf"/>
</dbReference>
<dbReference type="InterPro" id="IPR000194">
    <property type="entry name" value="ATPase_F1/V1/A1_a/bsu_nucl-bd"/>
</dbReference>
<dbReference type="InterPro" id="IPR027417">
    <property type="entry name" value="P-loop_NTPase"/>
</dbReference>
<dbReference type="NCBIfam" id="TIGR00962">
    <property type="entry name" value="atpA"/>
    <property type="match status" value="1"/>
</dbReference>
<dbReference type="NCBIfam" id="NF009884">
    <property type="entry name" value="PRK13343.1"/>
    <property type="match status" value="1"/>
</dbReference>
<dbReference type="PANTHER" id="PTHR48082">
    <property type="entry name" value="ATP SYNTHASE SUBUNIT ALPHA, MITOCHONDRIAL"/>
    <property type="match status" value="1"/>
</dbReference>
<dbReference type="PANTHER" id="PTHR48082:SF2">
    <property type="entry name" value="ATP SYNTHASE SUBUNIT ALPHA, MITOCHONDRIAL"/>
    <property type="match status" value="1"/>
</dbReference>
<dbReference type="Pfam" id="PF00006">
    <property type="entry name" value="ATP-synt_ab"/>
    <property type="match status" value="1"/>
</dbReference>
<dbReference type="Pfam" id="PF00306">
    <property type="entry name" value="ATP-synt_ab_C"/>
    <property type="match status" value="1"/>
</dbReference>
<dbReference type="Pfam" id="PF02874">
    <property type="entry name" value="ATP-synt_ab_N"/>
    <property type="match status" value="1"/>
</dbReference>
<dbReference type="PIRSF" id="PIRSF039088">
    <property type="entry name" value="F_ATPase_subunit_alpha"/>
    <property type="match status" value="1"/>
</dbReference>
<dbReference type="SUPFAM" id="SSF47917">
    <property type="entry name" value="C-terminal domain of alpha and beta subunits of F1 ATP synthase"/>
    <property type="match status" value="1"/>
</dbReference>
<dbReference type="SUPFAM" id="SSF50615">
    <property type="entry name" value="N-terminal domain of alpha and beta subunits of F1 ATP synthase"/>
    <property type="match status" value="1"/>
</dbReference>
<dbReference type="SUPFAM" id="SSF52540">
    <property type="entry name" value="P-loop containing nucleoside triphosphate hydrolases"/>
    <property type="match status" value="1"/>
</dbReference>
<dbReference type="PROSITE" id="PS00152">
    <property type="entry name" value="ATPASE_ALPHA_BETA"/>
    <property type="match status" value="1"/>
</dbReference>
<organism>
    <name type="scientific">Helicobacter pylori (strain J99 / ATCC 700824)</name>
    <name type="common">Campylobacter pylori J99</name>
    <dbReference type="NCBI Taxonomy" id="85963"/>
    <lineage>
        <taxon>Bacteria</taxon>
        <taxon>Pseudomonadati</taxon>
        <taxon>Campylobacterota</taxon>
        <taxon>Epsilonproteobacteria</taxon>
        <taxon>Campylobacterales</taxon>
        <taxon>Helicobacteraceae</taxon>
        <taxon>Helicobacter</taxon>
    </lineage>
</organism>
<sequence length="503" mass="55228">MSQLKLEEISSVIEEKIKNFELDCDMAEVGKVVSYADGVAKIYGLNGVMSYEVLEFETGDKGVAANLEEDSVGVIVFGFGNNIKEGTSVKRTKSLMKVPVGDAVVGRVLNALGEPIDGKGEIETNEFSLIEQKAPGIMDRKSVHEPLQTGIKAIDALVPIGRGQRELIIGDKQTGKTTVAIDAIINQKGQNVICIYVAIGQKESTVAQVVRKLEEYGAMEYSVVINASASDSAAMQYLAPYAGVAMGEYFRDHARHALIVYDDLSKHAVAYREISWILRRPPGREAFPGDVFYIHSRLLERAAKLCDEKGAGSLTALPIVETQAGDVSAYIPTNIISITDGQIFLETDLFYSGIRPAINVGLSVSRVGGAAQIKATKQVSGTLRLDLAQYRELQAFTQFASDLDEASKKQLERGQRMVEVLKQAPYSPLPIEKQVVIIYAGAKGFLDSVSVKKVVDFEEQLHPFLEAKYPQVLEEIHTKKVLDKDLEAMLRKVLEEFKLTYSE</sequence>
<protein>
    <recommendedName>
        <fullName evidence="1">ATP synthase subunit alpha</fullName>
        <ecNumber evidence="1">7.1.2.2</ecNumber>
    </recommendedName>
    <alternativeName>
        <fullName evidence="1">ATP synthase F1 sector subunit alpha</fullName>
    </alternativeName>
    <alternativeName>
        <fullName evidence="1">F-ATPase subunit alpha</fullName>
    </alternativeName>
</protein>
<evidence type="ECO:0000255" key="1">
    <source>
        <dbReference type="HAMAP-Rule" id="MF_01346"/>
    </source>
</evidence>